<name>RBFA_STRP4</name>
<comment type="function">
    <text evidence="1">One of several proteins that assist in the late maturation steps of the functional core of the 30S ribosomal subunit. Associates with free 30S ribosomal subunits (but not with 30S subunits that are part of 70S ribosomes or polysomes). Required for efficient processing of 16S rRNA. May interact with the 5'-terminal helix region of 16S rRNA.</text>
</comment>
<comment type="subunit">
    <text evidence="1">Monomer. Binds 30S ribosomal subunits, but not 50S ribosomal subunits or 70S ribosomes.</text>
</comment>
<comment type="subcellular location">
    <subcellularLocation>
        <location evidence="1">Cytoplasm</location>
    </subcellularLocation>
</comment>
<comment type="similarity">
    <text evidence="1">Belongs to the RbfA family.</text>
</comment>
<keyword id="KW-0963">Cytoplasm</keyword>
<keyword id="KW-0690">Ribosome biogenesis</keyword>
<protein>
    <recommendedName>
        <fullName evidence="1">Ribosome-binding factor A</fullName>
    </recommendedName>
</protein>
<dbReference type="EMBL" id="CP001015">
    <property type="protein sequence ID" value="ACF56049.1"/>
    <property type="molecule type" value="Genomic_DNA"/>
</dbReference>
<dbReference type="SMR" id="B5E267"/>
<dbReference type="KEGG" id="spx:SPG_0503"/>
<dbReference type="HOGENOM" id="CLU_089475_3_0_9"/>
<dbReference type="GO" id="GO:0005829">
    <property type="term" value="C:cytosol"/>
    <property type="evidence" value="ECO:0007669"/>
    <property type="project" value="TreeGrafter"/>
</dbReference>
<dbReference type="GO" id="GO:0043024">
    <property type="term" value="F:ribosomal small subunit binding"/>
    <property type="evidence" value="ECO:0007669"/>
    <property type="project" value="TreeGrafter"/>
</dbReference>
<dbReference type="GO" id="GO:0030490">
    <property type="term" value="P:maturation of SSU-rRNA"/>
    <property type="evidence" value="ECO:0007669"/>
    <property type="project" value="UniProtKB-UniRule"/>
</dbReference>
<dbReference type="FunFam" id="3.30.300.20:FF:000012">
    <property type="entry name" value="Ribosome-binding factor A"/>
    <property type="match status" value="1"/>
</dbReference>
<dbReference type="Gene3D" id="3.30.300.20">
    <property type="match status" value="1"/>
</dbReference>
<dbReference type="HAMAP" id="MF_00003">
    <property type="entry name" value="RbfA"/>
    <property type="match status" value="1"/>
</dbReference>
<dbReference type="InterPro" id="IPR015946">
    <property type="entry name" value="KH_dom-like_a/b"/>
</dbReference>
<dbReference type="InterPro" id="IPR000238">
    <property type="entry name" value="RbfA"/>
</dbReference>
<dbReference type="InterPro" id="IPR023799">
    <property type="entry name" value="RbfA_dom_sf"/>
</dbReference>
<dbReference type="InterPro" id="IPR020053">
    <property type="entry name" value="Ribosome-bd_factorA_CS"/>
</dbReference>
<dbReference type="NCBIfam" id="TIGR00082">
    <property type="entry name" value="rbfA"/>
    <property type="match status" value="1"/>
</dbReference>
<dbReference type="PANTHER" id="PTHR33515">
    <property type="entry name" value="RIBOSOME-BINDING FACTOR A, CHLOROPLASTIC-RELATED"/>
    <property type="match status" value="1"/>
</dbReference>
<dbReference type="PANTHER" id="PTHR33515:SF1">
    <property type="entry name" value="RIBOSOME-BINDING FACTOR A, CHLOROPLASTIC-RELATED"/>
    <property type="match status" value="1"/>
</dbReference>
<dbReference type="Pfam" id="PF02033">
    <property type="entry name" value="RBFA"/>
    <property type="match status" value="1"/>
</dbReference>
<dbReference type="SUPFAM" id="SSF89919">
    <property type="entry name" value="Ribosome-binding factor A, RbfA"/>
    <property type="match status" value="1"/>
</dbReference>
<dbReference type="PROSITE" id="PS01319">
    <property type="entry name" value="RBFA"/>
    <property type="match status" value="1"/>
</dbReference>
<gene>
    <name evidence="1" type="primary">rbfA</name>
    <name type="ordered locus">SPG_0503</name>
</gene>
<proteinExistence type="inferred from homology"/>
<reference key="1">
    <citation type="journal article" date="2001" name="Microb. Drug Resist.">
        <title>Annotated draft genomic sequence from a Streptococcus pneumoniae type 19F clinical isolate.</title>
        <authorList>
            <person name="Dopazo J."/>
            <person name="Mendoza A."/>
            <person name="Herrero J."/>
            <person name="Caldara F."/>
            <person name="Humbert Y."/>
            <person name="Friedli L."/>
            <person name="Guerrier M."/>
            <person name="Grand-Schenk E."/>
            <person name="Gandin C."/>
            <person name="de Francesco M."/>
            <person name="Polissi A."/>
            <person name="Buell G."/>
            <person name="Feger G."/>
            <person name="Garcia E."/>
            <person name="Peitsch M."/>
            <person name="Garcia-Bustos J.F."/>
        </authorList>
    </citation>
    <scope>NUCLEOTIDE SEQUENCE [LARGE SCALE GENOMIC DNA]</scope>
    <source>
        <strain>G54</strain>
    </source>
</reference>
<reference key="2">
    <citation type="submission" date="2008-03" db="EMBL/GenBank/DDBJ databases">
        <title>Pneumococcal beta glucoside metabolism investigated by whole genome comparison.</title>
        <authorList>
            <person name="Mulas L."/>
            <person name="Trappetti C."/>
            <person name="Hakenbeck R."/>
            <person name="Iannelli F."/>
            <person name="Pozzi G."/>
            <person name="Davidsen T.M."/>
            <person name="Tettelin H."/>
            <person name="Oggioni M."/>
        </authorList>
    </citation>
    <scope>NUCLEOTIDE SEQUENCE [LARGE SCALE GENOMIC DNA]</scope>
    <source>
        <strain>G54</strain>
    </source>
</reference>
<accession>B5E267</accession>
<evidence type="ECO:0000255" key="1">
    <source>
        <dbReference type="HAMAP-Rule" id="MF_00003"/>
    </source>
</evidence>
<sequence>MANHFRTDRVGMEIKREVNEILQKKVRDPRVQGVTITDVQMLGDLSVAKVYYTILSNLASDNQKAQIGLEKATGTIKRELGRNLKLYKIPDLTFVKDESIEYGNKIDEMLRNLDKN</sequence>
<organism>
    <name type="scientific">Streptococcus pneumoniae serotype 19F (strain G54)</name>
    <dbReference type="NCBI Taxonomy" id="512566"/>
    <lineage>
        <taxon>Bacteria</taxon>
        <taxon>Bacillati</taxon>
        <taxon>Bacillota</taxon>
        <taxon>Bacilli</taxon>
        <taxon>Lactobacillales</taxon>
        <taxon>Streptococcaceae</taxon>
        <taxon>Streptococcus</taxon>
    </lineage>
</organism>
<feature type="chain" id="PRO_1000088935" description="Ribosome-binding factor A">
    <location>
        <begin position="1"/>
        <end position="116"/>
    </location>
</feature>